<accession>Q5H6D9</accession>
<comment type="function">
    <text evidence="1">NAD-binding protein involved in the addition of a carboxymethylaminomethyl (cmnm) group at the wobble position (U34) of certain tRNAs, forming tRNA-cmnm(5)s(2)U34.</text>
</comment>
<comment type="cofactor">
    <cofactor evidence="1">
        <name>FAD</name>
        <dbReference type="ChEBI" id="CHEBI:57692"/>
    </cofactor>
</comment>
<comment type="subunit">
    <text evidence="1">Homodimer. Heterotetramer of two MnmE and two MnmG subunits.</text>
</comment>
<comment type="subcellular location">
    <subcellularLocation>
        <location evidence="1">Cytoplasm</location>
    </subcellularLocation>
</comment>
<comment type="similarity">
    <text evidence="1">Belongs to the MnmG family.</text>
</comment>
<evidence type="ECO:0000255" key="1">
    <source>
        <dbReference type="HAMAP-Rule" id="MF_00129"/>
    </source>
</evidence>
<reference key="1">
    <citation type="journal article" date="2005" name="Nucleic Acids Res.">
        <title>The genome sequence of Xanthomonas oryzae pathovar oryzae KACC10331, the bacterial blight pathogen of rice.</title>
        <authorList>
            <person name="Lee B.-M."/>
            <person name="Park Y.-J."/>
            <person name="Park D.-S."/>
            <person name="Kang H.-W."/>
            <person name="Kim J.-G."/>
            <person name="Song E.-S."/>
            <person name="Park I.-C."/>
            <person name="Yoon U.-H."/>
            <person name="Hahn J.-H."/>
            <person name="Koo B.-S."/>
            <person name="Lee G.-B."/>
            <person name="Kim H."/>
            <person name="Park H.-S."/>
            <person name="Yoon K.-O."/>
            <person name="Kim J.-H."/>
            <person name="Jung C.-H."/>
            <person name="Koh N.-H."/>
            <person name="Seo J.-S."/>
            <person name="Go S.-J."/>
        </authorList>
    </citation>
    <scope>NUCLEOTIDE SEQUENCE [LARGE SCALE GENOMIC DNA]</scope>
    <source>
        <strain>KACC10331 / KXO85</strain>
    </source>
</reference>
<keyword id="KW-0963">Cytoplasm</keyword>
<keyword id="KW-0274">FAD</keyword>
<keyword id="KW-0285">Flavoprotein</keyword>
<keyword id="KW-0520">NAD</keyword>
<keyword id="KW-1185">Reference proteome</keyword>
<keyword id="KW-0819">tRNA processing</keyword>
<feature type="chain" id="PRO_0000117220" description="tRNA uridine 5-carboxymethylaminomethyl modification enzyme MnmG">
    <location>
        <begin position="1"/>
        <end position="634"/>
    </location>
</feature>
<feature type="binding site" evidence="1">
    <location>
        <begin position="14"/>
        <end position="19"/>
    </location>
    <ligand>
        <name>FAD</name>
        <dbReference type="ChEBI" id="CHEBI:57692"/>
    </ligand>
</feature>
<feature type="binding site" evidence="1">
    <location>
        <begin position="279"/>
        <end position="293"/>
    </location>
    <ligand>
        <name>NAD(+)</name>
        <dbReference type="ChEBI" id="CHEBI:57540"/>
    </ligand>
</feature>
<gene>
    <name evidence="1" type="primary">mnmG</name>
    <name evidence="1" type="synonym">gidA</name>
    <name type="ordered locus">XOO0227</name>
</gene>
<proteinExistence type="inferred from homology"/>
<dbReference type="EMBL" id="AE013598">
    <property type="protein sequence ID" value="AAW73481.1"/>
    <property type="molecule type" value="Genomic_DNA"/>
</dbReference>
<dbReference type="SMR" id="Q5H6D9"/>
<dbReference type="STRING" id="291331.XOO0227"/>
<dbReference type="KEGG" id="xoo:XOO0227"/>
<dbReference type="PATRIC" id="fig|291331.8.peg.259"/>
<dbReference type="HOGENOM" id="CLU_007831_2_2_6"/>
<dbReference type="Proteomes" id="UP000006735">
    <property type="component" value="Chromosome"/>
</dbReference>
<dbReference type="GO" id="GO:0005829">
    <property type="term" value="C:cytosol"/>
    <property type="evidence" value="ECO:0007669"/>
    <property type="project" value="TreeGrafter"/>
</dbReference>
<dbReference type="GO" id="GO:0050660">
    <property type="term" value="F:flavin adenine dinucleotide binding"/>
    <property type="evidence" value="ECO:0007669"/>
    <property type="project" value="UniProtKB-UniRule"/>
</dbReference>
<dbReference type="GO" id="GO:0030488">
    <property type="term" value="P:tRNA methylation"/>
    <property type="evidence" value="ECO:0007669"/>
    <property type="project" value="TreeGrafter"/>
</dbReference>
<dbReference type="GO" id="GO:0002098">
    <property type="term" value="P:tRNA wobble uridine modification"/>
    <property type="evidence" value="ECO:0007669"/>
    <property type="project" value="InterPro"/>
</dbReference>
<dbReference type="FunFam" id="1.10.10.1800:FF:000001">
    <property type="entry name" value="tRNA uridine 5-carboxymethylaminomethyl modification enzyme MnmG"/>
    <property type="match status" value="1"/>
</dbReference>
<dbReference type="FunFam" id="1.10.150.570:FF:000001">
    <property type="entry name" value="tRNA uridine 5-carboxymethylaminomethyl modification enzyme MnmG"/>
    <property type="match status" value="1"/>
</dbReference>
<dbReference type="FunFam" id="3.50.50.60:FF:000002">
    <property type="entry name" value="tRNA uridine 5-carboxymethylaminomethyl modification enzyme MnmG"/>
    <property type="match status" value="1"/>
</dbReference>
<dbReference type="FunFam" id="3.50.50.60:FF:000010">
    <property type="entry name" value="tRNA uridine 5-carboxymethylaminomethyl modification enzyme MnmG"/>
    <property type="match status" value="1"/>
</dbReference>
<dbReference type="Gene3D" id="3.50.50.60">
    <property type="entry name" value="FAD/NAD(P)-binding domain"/>
    <property type="match status" value="2"/>
</dbReference>
<dbReference type="Gene3D" id="1.10.150.570">
    <property type="entry name" value="GidA associated domain, C-terminal subdomain"/>
    <property type="match status" value="1"/>
</dbReference>
<dbReference type="Gene3D" id="1.10.10.1800">
    <property type="entry name" value="tRNA uridine 5-carboxymethylaminomethyl modification enzyme MnmG/GidA"/>
    <property type="match status" value="1"/>
</dbReference>
<dbReference type="HAMAP" id="MF_00129">
    <property type="entry name" value="MnmG_GidA"/>
    <property type="match status" value="1"/>
</dbReference>
<dbReference type="InterPro" id="IPR036188">
    <property type="entry name" value="FAD/NAD-bd_sf"/>
</dbReference>
<dbReference type="InterPro" id="IPR049312">
    <property type="entry name" value="GIDA_C_N"/>
</dbReference>
<dbReference type="InterPro" id="IPR004416">
    <property type="entry name" value="MnmG"/>
</dbReference>
<dbReference type="InterPro" id="IPR002218">
    <property type="entry name" value="MnmG-rel"/>
</dbReference>
<dbReference type="InterPro" id="IPR020595">
    <property type="entry name" value="MnmG-rel_CS"/>
</dbReference>
<dbReference type="InterPro" id="IPR026904">
    <property type="entry name" value="MnmG_C"/>
</dbReference>
<dbReference type="InterPro" id="IPR047001">
    <property type="entry name" value="MnmG_C_subdom"/>
</dbReference>
<dbReference type="InterPro" id="IPR044920">
    <property type="entry name" value="MnmG_C_subdom_sf"/>
</dbReference>
<dbReference type="InterPro" id="IPR040131">
    <property type="entry name" value="MnmG_N"/>
</dbReference>
<dbReference type="NCBIfam" id="TIGR00136">
    <property type="entry name" value="mnmG_gidA"/>
    <property type="match status" value="1"/>
</dbReference>
<dbReference type="PANTHER" id="PTHR11806">
    <property type="entry name" value="GLUCOSE INHIBITED DIVISION PROTEIN A"/>
    <property type="match status" value="1"/>
</dbReference>
<dbReference type="PANTHER" id="PTHR11806:SF0">
    <property type="entry name" value="PROTEIN MTO1 HOMOLOG, MITOCHONDRIAL"/>
    <property type="match status" value="1"/>
</dbReference>
<dbReference type="Pfam" id="PF01134">
    <property type="entry name" value="GIDA"/>
    <property type="match status" value="1"/>
</dbReference>
<dbReference type="Pfam" id="PF21680">
    <property type="entry name" value="GIDA_C_1st"/>
    <property type="match status" value="1"/>
</dbReference>
<dbReference type="Pfam" id="PF13932">
    <property type="entry name" value="SAM_GIDA_C"/>
    <property type="match status" value="1"/>
</dbReference>
<dbReference type="SMART" id="SM01228">
    <property type="entry name" value="GIDA_assoc_3"/>
    <property type="match status" value="1"/>
</dbReference>
<dbReference type="SUPFAM" id="SSF51905">
    <property type="entry name" value="FAD/NAD(P)-binding domain"/>
    <property type="match status" value="1"/>
</dbReference>
<dbReference type="PROSITE" id="PS01280">
    <property type="entry name" value="GIDA_1"/>
    <property type="match status" value="1"/>
</dbReference>
<dbReference type="PROSITE" id="PS01281">
    <property type="entry name" value="GIDA_2"/>
    <property type="match status" value="1"/>
</dbReference>
<name>MNMG_XANOR</name>
<organism>
    <name type="scientific">Xanthomonas oryzae pv. oryzae (strain KACC10331 / KXO85)</name>
    <dbReference type="NCBI Taxonomy" id="291331"/>
    <lineage>
        <taxon>Bacteria</taxon>
        <taxon>Pseudomonadati</taxon>
        <taxon>Pseudomonadota</taxon>
        <taxon>Gammaproteobacteria</taxon>
        <taxon>Lysobacterales</taxon>
        <taxon>Lysobacteraceae</taxon>
        <taxon>Xanthomonas</taxon>
    </lineage>
</organism>
<protein>
    <recommendedName>
        <fullName evidence="1">tRNA uridine 5-carboxymethylaminomethyl modification enzyme MnmG</fullName>
    </recommendedName>
    <alternativeName>
        <fullName evidence="1">Glucose-inhibited division protein A</fullName>
    </alternativeName>
</protein>
<sequence>MSDSFYRYDVIVIGGGHAGTEAALASARAGAHTLLLTHTIETVGAMSCNPAIGGIGKGHLVKEIDALGGAMAHAADLAGIQWRTLNASKGPAVRATRCQADRNLYRTAIRCIVQAQPKLTVFQAAVDDLIIHNGTCEADSVRGVITQTGLRFEAPSVVLTAGTFLAGKIHVGDTQYAAGRLGDPPATTLAARLRERPFAIDRLKTGTPPRIDGRTLDYGVMGEQPGDDPLPVMSFMGQVSDHPRQVSCWITQTTEQTHDIIRNALHRSPLYSGQIEGIGPRYCPSIEDKVVRFAEKTSHQIFVEPEGLDVAEIYPNGISTSLPFDVQLALVRSIHGFAQAHITRPGYAIEYDFFDPRGLKASLETKAVGGLFFAGQINGTTGYEEAAAQGLLAGLNAARHVHGLPAWSPRRDEAYLGVLVDDLITHGTTEPYRMFTSRAEYRLQLREDNADARLTGAGREMGLVDDARWARFSAKQEAVQRETARLSALWATPGNALGREVADALGVTVSRETNVLDLIKRPELNYATLMRVPTLGPGVDDAQVAEQVEISVKYTGYLDRQRDDIARQQRHETTPIPEGFDYAGVRGLSIEVQQKLEHVRPQHIGQAQRIPGMTPAAISLLLVHLERARRHRVA</sequence>